<feature type="transit peptide" description="Mitochondrion" evidence="2">
    <location>
        <begin position="1"/>
        <end status="unknown"/>
    </location>
</feature>
<feature type="chain" id="PRO_0000278282" description="Large ribosomal subunit protein mL54">
    <location>
        <begin status="unknown"/>
        <end position="135"/>
    </location>
</feature>
<reference key="1">
    <citation type="journal article" date="2013" name="Nature">
        <title>The zebrafish reference genome sequence and its relationship to the human genome.</title>
        <authorList>
            <person name="Howe K."/>
            <person name="Clark M.D."/>
            <person name="Torroja C.F."/>
            <person name="Torrance J."/>
            <person name="Berthelot C."/>
            <person name="Muffato M."/>
            <person name="Collins J.E."/>
            <person name="Humphray S."/>
            <person name="McLaren K."/>
            <person name="Matthews L."/>
            <person name="McLaren S."/>
            <person name="Sealy I."/>
            <person name="Caccamo M."/>
            <person name="Churcher C."/>
            <person name="Scott C."/>
            <person name="Barrett J.C."/>
            <person name="Koch R."/>
            <person name="Rauch G.J."/>
            <person name="White S."/>
            <person name="Chow W."/>
            <person name="Kilian B."/>
            <person name="Quintais L.T."/>
            <person name="Guerra-Assuncao J.A."/>
            <person name="Zhou Y."/>
            <person name="Gu Y."/>
            <person name="Yen J."/>
            <person name="Vogel J.H."/>
            <person name="Eyre T."/>
            <person name="Redmond S."/>
            <person name="Banerjee R."/>
            <person name="Chi J."/>
            <person name="Fu B."/>
            <person name="Langley E."/>
            <person name="Maguire S.F."/>
            <person name="Laird G.K."/>
            <person name="Lloyd D."/>
            <person name="Kenyon E."/>
            <person name="Donaldson S."/>
            <person name="Sehra H."/>
            <person name="Almeida-King J."/>
            <person name="Loveland J."/>
            <person name="Trevanion S."/>
            <person name="Jones M."/>
            <person name="Quail M."/>
            <person name="Willey D."/>
            <person name="Hunt A."/>
            <person name="Burton J."/>
            <person name="Sims S."/>
            <person name="McLay K."/>
            <person name="Plumb B."/>
            <person name="Davis J."/>
            <person name="Clee C."/>
            <person name="Oliver K."/>
            <person name="Clark R."/>
            <person name="Riddle C."/>
            <person name="Elliot D."/>
            <person name="Threadgold G."/>
            <person name="Harden G."/>
            <person name="Ware D."/>
            <person name="Begum S."/>
            <person name="Mortimore B."/>
            <person name="Kerry G."/>
            <person name="Heath P."/>
            <person name="Phillimore B."/>
            <person name="Tracey A."/>
            <person name="Corby N."/>
            <person name="Dunn M."/>
            <person name="Johnson C."/>
            <person name="Wood J."/>
            <person name="Clark S."/>
            <person name="Pelan S."/>
            <person name="Griffiths G."/>
            <person name="Smith M."/>
            <person name="Glithero R."/>
            <person name="Howden P."/>
            <person name="Barker N."/>
            <person name="Lloyd C."/>
            <person name="Stevens C."/>
            <person name="Harley J."/>
            <person name="Holt K."/>
            <person name="Panagiotidis G."/>
            <person name="Lovell J."/>
            <person name="Beasley H."/>
            <person name="Henderson C."/>
            <person name="Gordon D."/>
            <person name="Auger K."/>
            <person name="Wright D."/>
            <person name="Collins J."/>
            <person name="Raisen C."/>
            <person name="Dyer L."/>
            <person name="Leung K."/>
            <person name="Robertson L."/>
            <person name="Ambridge K."/>
            <person name="Leongamornlert D."/>
            <person name="McGuire S."/>
            <person name="Gilderthorp R."/>
            <person name="Griffiths C."/>
            <person name="Manthravadi D."/>
            <person name="Nichol S."/>
            <person name="Barker G."/>
            <person name="Whitehead S."/>
            <person name="Kay M."/>
            <person name="Brown J."/>
            <person name="Murnane C."/>
            <person name="Gray E."/>
            <person name="Humphries M."/>
            <person name="Sycamore N."/>
            <person name="Barker D."/>
            <person name="Saunders D."/>
            <person name="Wallis J."/>
            <person name="Babbage A."/>
            <person name="Hammond S."/>
            <person name="Mashreghi-Mohammadi M."/>
            <person name="Barr L."/>
            <person name="Martin S."/>
            <person name="Wray P."/>
            <person name="Ellington A."/>
            <person name="Matthews N."/>
            <person name="Ellwood M."/>
            <person name="Woodmansey R."/>
            <person name="Clark G."/>
            <person name="Cooper J."/>
            <person name="Tromans A."/>
            <person name="Grafham D."/>
            <person name="Skuce C."/>
            <person name="Pandian R."/>
            <person name="Andrews R."/>
            <person name="Harrison E."/>
            <person name="Kimberley A."/>
            <person name="Garnett J."/>
            <person name="Fosker N."/>
            <person name="Hall R."/>
            <person name="Garner P."/>
            <person name="Kelly D."/>
            <person name="Bird C."/>
            <person name="Palmer S."/>
            <person name="Gehring I."/>
            <person name="Berger A."/>
            <person name="Dooley C.M."/>
            <person name="Ersan-Urun Z."/>
            <person name="Eser C."/>
            <person name="Geiger H."/>
            <person name="Geisler M."/>
            <person name="Karotki L."/>
            <person name="Kirn A."/>
            <person name="Konantz J."/>
            <person name="Konantz M."/>
            <person name="Oberlander M."/>
            <person name="Rudolph-Geiger S."/>
            <person name="Teucke M."/>
            <person name="Lanz C."/>
            <person name="Raddatz G."/>
            <person name="Osoegawa K."/>
            <person name="Zhu B."/>
            <person name="Rapp A."/>
            <person name="Widaa S."/>
            <person name="Langford C."/>
            <person name="Yang F."/>
            <person name="Schuster S.C."/>
            <person name="Carter N.P."/>
            <person name="Harrow J."/>
            <person name="Ning Z."/>
            <person name="Herrero J."/>
            <person name="Searle S.M."/>
            <person name="Enright A."/>
            <person name="Geisler R."/>
            <person name="Plasterk R.H."/>
            <person name="Lee C."/>
            <person name="Westerfield M."/>
            <person name="de Jong P.J."/>
            <person name="Zon L.I."/>
            <person name="Postlethwait J.H."/>
            <person name="Nusslein-Volhard C."/>
            <person name="Hubbard T.J."/>
            <person name="Roest Crollius H."/>
            <person name="Rogers J."/>
            <person name="Stemple D.L."/>
        </authorList>
    </citation>
    <scope>NUCLEOTIDE SEQUENCE [LARGE SCALE GENOMIC DNA]</scope>
    <source>
        <strain>Tuebingen</strain>
    </source>
</reference>
<proteinExistence type="inferred from homology"/>
<accession>Q1LXI5</accession>
<keyword id="KW-0496">Mitochondrion</keyword>
<keyword id="KW-1185">Reference proteome</keyword>
<keyword id="KW-0687">Ribonucleoprotein</keyword>
<keyword id="KW-0689">Ribosomal protein</keyword>
<keyword id="KW-0809">Transit peptide</keyword>
<evidence type="ECO:0000250" key="1">
    <source>
        <dbReference type="UniProtKB" id="Q6P161"/>
    </source>
</evidence>
<evidence type="ECO:0000255" key="2"/>
<evidence type="ECO:0000305" key="3"/>
<sequence length="135" mass="15830">MAHTVLQPFKRINLPVLNAYNNLFCNTFLVQTRSYAKKPVFKGKGKGMVKEVLKGPEVCKDPAKLCTYAVGVNVFKQGEDPTIKPKDEYPEWLFQLNLGPVKQLNELEPDSWEYWRRIRKEHIWRHNKLNKGKKM</sequence>
<dbReference type="EMBL" id="BX323550">
    <property type="protein sequence ID" value="CAK11408.1"/>
    <property type="status" value="ALT_SEQ"/>
    <property type="molecule type" value="Genomic_DNA"/>
</dbReference>
<dbReference type="RefSeq" id="NP_001333205.1">
    <property type="nucleotide sequence ID" value="NM_001346276.1"/>
</dbReference>
<dbReference type="SMR" id="Q1LXI5"/>
<dbReference type="FunCoup" id="Q1LXI5">
    <property type="interactions" value="832"/>
</dbReference>
<dbReference type="STRING" id="7955.ENSDARP00000096469"/>
<dbReference type="PaxDb" id="7955-ENSDARP00000096469"/>
<dbReference type="Ensembl" id="ENSDART00000105692">
    <property type="protein sequence ID" value="ENSDARP00000096469"/>
    <property type="gene ID" value="ENSDARG00000071468"/>
</dbReference>
<dbReference type="GeneID" id="100034614"/>
<dbReference type="KEGG" id="dre:100034614"/>
<dbReference type="AGR" id="ZFIN:ZDB-GENE-050208-381"/>
<dbReference type="CTD" id="116541"/>
<dbReference type="ZFIN" id="ZDB-GENE-050208-381">
    <property type="gene designation" value="mrpl54"/>
</dbReference>
<dbReference type="eggNOG" id="KOG3435">
    <property type="taxonomic scope" value="Eukaryota"/>
</dbReference>
<dbReference type="HOGENOM" id="CLU_143073_0_0_1"/>
<dbReference type="InParanoid" id="Q1LXI5"/>
<dbReference type="OMA" id="WLFEMNV"/>
<dbReference type="OrthoDB" id="10252718at2759"/>
<dbReference type="PhylomeDB" id="Q1LXI5"/>
<dbReference type="TreeFam" id="TF314007"/>
<dbReference type="Reactome" id="R-DRE-5389840">
    <property type="pathway name" value="Mitochondrial translation elongation"/>
</dbReference>
<dbReference type="Reactome" id="R-DRE-5419276">
    <property type="pathway name" value="Mitochondrial translation termination"/>
</dbReference>
<dbReference type="PRO" id="PR:Q1LXI5"/>
<dbReference type="Proteomes" id="UP000000437">
    <property type="component" value="Alternate scaffold 22"/>
</dbReference>
<dbReference type="Proteomes" id="UP000000437">
    <property type="component" value="Chromosome 22"/>
</dbReference>
<dbReference type="Bgee" id="ENSDARG00000071468">
    <property type="expression patterns" value="Expressed in pharyngeal gill and 29 other cell types or tissues"/>
</dbReference>
<dbReference type="GO" id="GO:0005762">
    <property type="term" value="C:mitochondrial large ribosomal subunit"/>
    <property type="evidence" value="ECO:0000250"/>
    <property type="project" value="UniProtKB"/>
</dbReference>
<dbReference type="GO" id="GO:0003735">
    <property type="term" value="F:structural constituent of ribosome"/>
    <property type="evidence" value="ECO:0000318"/>
    <property type="project" value="GO_Central"/>
</dbReference>
<dbReference type="InterPro" id="IPR013870">
    <property type="entry name" value="Ribosomal_mL54"/>
</dbReference>
<dbReference type="PANTHER" id="PTHR28595">
    <property type="entry name" value="39S RIBOSOMAL PROTEIN L54, MITOCHONDRIAL"/>
    <property type="match status" value="1"/>
</dbReference>
<dbReference type="PANTHER" id="PTHR28595:SF1">
    <property type="entry name" value="LARGE RIBOSOMAL SUBUNIT PROTEIN ML54"/>
    <property type="match status" value="1"/>
</dbReference>
<dbReference type="Pfam" id="PF08561">
    <property type="entry name" value="Ribosomal_L37"/>
    <property type="match status" value="1"/>
</dbReference>
<name>RM54_DANRE</name>
<protein>
    <recommendedName>
        <fullName evidence="3">Large ribosomal subunit protein mL54</fullName>
    </recommendedName>
    <alternativeName>
        <fullName>39S ribosomal protein L54, mitochondrial</fullName>
        <shortName>L54mt</shortName>
        <shortName>MRP-L54</shortName>
    </alternativeName>
</protein>
<organism>
    <name type="scientific">Danio rerio</name>
    <name type="common">Zebrafish</name>
    <name type="synonym">Brachydanio rerio</name>
    <dbReference type="NCBI Taxonomy" id="7955"/>
    <lineage>
        <taxon>Eukaryota</taxon>
        <taxon>Metazoa</taxon>
        <taxon>Chordata</taxon>
        <taxon>Craniata</taxon>
        <taxon>Vertebrata</taxon>
        <taxon>Euteleostomi</taxon>
        <taxon>Actinopterygii</taxon>
        <taxon>Neopterygii</taxon>
        <taxon>Teleostei</taxon>
        <taxon>Ostariophysi</taxon>
        <taxon>Cypriniformes</taxon>
        <taxon>Danionidae</taxon>
        <taxon>Danioninae</taxon>
        <taxon>Danio</taxon>
    </lineage>
</organism>
<comment type="subunit">
    <text evidence="1">Component of the mitochondrial ribosome large subunit (39S) which comprises a 16S rRNA and about 50 distinct proteins.</text>
</comment>
<comment type="subcellular location">
    <subcellularLocation>
        <location evidence="1">Mitochondrion</location>
    </subcellularLocation>
</comment>
<comment type="similarity">
    <text evidence="3">Belongs to the mitochondrion-specific ribosomal protein mL54 family.</text>
</comment>
<comment type="sequence caution" evidence="3">
    <conflict type="erroneous gene model prediction">
        <sequence resource="EMBL-CDS" id="CAK11408"/>
    </conflict>
</comment>
<gene>
    <name type="primary">mrpl54</name>
    <name type="ORF">si:dkeyp-70f9.5</name>
</gene>